<proteinExistence type="evidence at protein level"/>
<dbReference type="EMBL" id="AK312321">
    <property type="protein sequence ID" value="BAG35243.1"/>
    <property type="molecule type" value="mRNA"/>
</dbReference>
<dbReference type="EMBL" id="AL833856">
    <property type="protein sequence ID" value="CAD38715.1"/>
    <property type="molecule type" value="mRNA"/>
</dbReference>
<dbReference type="EMBL" id="AL833604">
    <property type="protein sequence ID" value="CAD91170.1"/>
    <property type="molecule type" value="mRNA"/>
</dbReference>
<dbReference type="EMBL" id="BX538016">
    <property type="protein sequence ID" value="CAD97963.1"/>
    <property type="molecule type" value="mRNA"/>
</dbReference>
<dbReference type="EMBL" id="BX538101">
    <property type="protein sequence ID" value="CAD98016.1"/>
    <property type="molecule type" value="mRNA"/>
</dbReference>
<dbReference type="EMBL" id="AC002086">
    <property type="protein sequence ID" value="AAB54087.1"/>
    <property type="molecule type" value="Genomic_DNA"/>
</dbReference>
<dbReference type="EMBL" id="CH471107">
    <property type="protein sequence ID" value="EAX11891.1"/>
    <property type="molecule type" value="Genomic_DNA"/>
</dbReference>
<dbReference type="EMBL" id="BC042753">
    <property type="protein sequence ID" value="AAH42753.1"/>
    <property type="molecule type" value="mRNA"/>
</dbReference>
<dbReference type="CCDS" id="CCDS14596.1"/>
<dbReference type="RefSeq" id="NP_001171671.1">
    <property type="nucleotide sequence ID" value="NM_001184742.2"/>
</dbReference>
<dbReference type="RefSeq" id="NP_006768.1">
    <property type="nucleotide sequence ID" value="NM_006777.4"/>
</dbReference>
<dbReference type="PDB" id="2LT7">
    <property type="method" value="NMR"/>
    <property type="chains" value="A=472-604"/>
</dbReference>
<dbReference type="PDB" id="3FKC">
    <property type="method" value="X-ray"/>
    <property type="resolution" value="1.70 A"/>
    <property type="chains" value="A=1-114"/>
</dbReference>
<dbReference type="PDB" id="3M4T">
    <property type="method" value="X-ray"/>
    <property type="resolution" value="2.05 A"/>
    <property type="chains" value="A=1-122"/>
</dbReference>
<dbReference type="PDB" id="3M8V">
    <property type="method" value="X-ray"/>
    <property type="resolution" value="2.70 A"/>
    <property type="chains" value="A=1-122"/>
</dbReference>
<dbReference type="PDB" id="4F6M">
    <property type="method" value="X-ray"/>
    <property type="resolution" value="2.40 A"/>
    <property type="chains" value="A=472-604"/>
</dbReference>
<dbReference type="PDB" id="4F6N">
    <property type="method" value="X-ray"/>
    <property type="resolution" value="2.80 A"/>
    <property type="chains" value="A=472-604"/>
</dbReference>
<dbReference type="PDB" id="5VMU">
    <property type="method" value="X-ray"/>
    <property type="resolution" value="2.35 A"/>
    <property type="chains" value="A=471-604"/>
</dbReference>
<dbReference type="PDB" id="5VMV">
    <property type="method" value="X-ray"/>
    <property type="resolution" value="2.31 A"/>
    <property type="chains" value="A=471-604"/>
</dbReference>
<dbReference type="PDB" id="5VMW">
    <property type="method" value="X-ray"/>
    <property type="resolution" value="2.40 A"/>
    <property type="chains" value="A=471-604"/>
</dbReference>
<dbReference type="PDB" id="5VMX">
    <property type="method" value="X-ray"/>
    <property type="resolution" value="2.05 A"/>
    <property type="chains" value="A=471-604"/>
</dbReference>
<dbReference type="PDB" id="5VMY">
    <property type="method" value="X-ray"/>
    <property type="resolution" value="2.00 A"/>
    <property type="chains" value="A=471-604"/>
</dbReference>
<dbReference type="PDB" id="5VMZ">
    <property type="method" value="X-ray"/>
    <property type="resolution" value="2.32 A"/>
    <property type="chains" value="A=471-604"/>
</dbReference>
<dbReference type="PDB" id="6DF5">
    <property type="method" value="X-ray"/>
    <property type="resolution" value="1.82 A"/>
    <property type="chains" value="A=471-604"/>
</dbReference>
<dbReference type="PDB" id="6DF8">
    <property type="method" value="X-ray"/>
    <property type="resolution" value="2.54 A"/>
    <property type="chains" value="A=471-604"/>
</dbReference>
<dbReference type="PDB" id="6DF9">
    <property type="method" value="X-ray"/>
    <property type="resolution" value="2.32 A"/>
    <property type="chains" value="A=471-604"/>
</dbReference>
<dbReference type="PDB" id="6DFA">
    <property type="method" value="X-ray"/>
    <property type="resolution" value="1.91 A"/>
    <property type="chains" value="A=471-604"/>
</dbReference>
<dbReference type="PDB" id="6DFB">
    <property type="method" value="X-ray"/>
    <property type="resolution" value="1.66 A"/>
    <property type="chains" value="A=471-604"/>
</dbReference>
<dbReference type="PDB" id="6DFC">
    <property type="method" value="X-ray"/>
    <property type="resolution" value="1.85 A"/>
    <property type="chains" value="A=471-604"/>
</dbReference>
<dbReference type="PDB" id="6V8U">
    <property type="method" value="X-ray"/>
    <property type="resolution" value="2.10 A"/>
    <property type="chains" value="A=471-604"/>
</dbReference>
<dbReference type="PDBsum" id="2LT7"/>
<dbReference type="PDBsum" id="3FKC"/>
<dbReference type="PDBsum" id="3M4T"/>
<dbReference type="PDBsum" id="3M8V"/>
<dbReference type="PDBsum" id="4F6M"/>
<dbReference type="PDBsum" id="4F6N"/>
<dbReference type="PDBsum" id="5VMU"/>
<dbReference type="PDBsum" id="5VMV"/>
<dbReference type="PDBsum" id="5VMW"/>
<dbReference type="PDBsum" id="5VMX"/>
<dbReference type="PDBsum" id="5VMY"/>
<dbReference type="PDBsum" id="5VMZ"/>
<dbReference type="PDBsum" id="6DF5"/>
<dbReference type="PDBsum" id="6DF8"/>
<dbReference type="PDBsum" id="6DF9"/>
<dbReference type="PDBsum" id="6DFA"/>
<dbReference type="PDBsum" id="6DFB"/>
<dbReference type="PDBsum" id="6DFC"/>
<dbReference type="PDBsum" id="6V8U"/>
<dbReference type="SMR" id="Q86T24"/>
<dbReference type="BioGRID" id="115327">
    <property type="interactions" value="127"/>
</dbReference>
<dbReference type="CORUM" id="Q86T24"/>
<dbReference type="FunCoup" id="Q86T24">
    <property type="interactions" value="4979"/>
</dbReference>
<dbReference type="IntAct" id="Q86T24">
    <property type="interactions" value="59"/>
</dbReference>
<dbReference type="MINT" id="Q86T24"/>
<dbReference type="STRING" id="9606.ENSP00000450969"/>
<dbReference type="ChEMBL" id="CHEMBL5069376"/>
<dbReference type="GlyGen" id="Q86T24">
    <property type="glycosylation" value="2 sites, 1 O-linked glycan (2 sites)"/>
</dbReference>
<dbReference type="iPTMnet" id="Q86T24"/>
<dbReference type="PhosphoSitePlus" id="Q86T24"/>
<dbReference type="BioMuta" id="ZBTB33"/>
<dbReference type="DMDM" id="84029319"/>
<dbReference type="jPOST" id="Q86T24"/>
<dbReference type="MassIVE" id="Q86T24"/>
<dbReference type="PaxDb" id="9606-ENSP00000314153"/>
<dbReference type="PeptideAtlas" id="Q86T24"/>
<dbReference type="ProteomicsDB" id="69660"/>
<dbReference type="Pumba" id="Q86T24"/>
<dbReference type="Antibodypedia" id="401">
    <property type="antibodies" value="211 antibodies from 31 providers"/>
</dbReference>
<dbReference type="DNASU" id="10009"/>
<dbReference type="Ensembl" id="ENST00000326624.2">
    <property type="protein sequence ID" value="ENSP00000314153.2"/>
    <property type="gene ID" value="ENSG00000177485.7"/>
</dbReference>
<dbReference type="Ensembl" id="ENST00000557385.2">
    <property type="protein sequence ID" value="ENSP00000450969.1"/>
    <property type="gene ID" value="ENSG00000177485.7"/>
</dbReference>
<dbReference type="GeneID" id="10009"/>
<dbReference type="KEGG" id="hsa:10009"/>
<dbReference type="MANE-Select" id="ENST00000557385.2">
    <property type="protein sequence ID" value="ENSP00000450969.1"/>
    <property type="RefSeq nucleotide sequence ID" value="NM_001184742.2"/>
    <property type="RefSeq protein sequence ID" value="NP_001171671.1"/>
</dbReference>
<dbReference type="UCSC" id="uc004esn.2">
    <property type="organism name" value="human"/>
</dbReference>
<dbReference type="AGR" id="HGNC:16682"/>
<dbReference type="CTD" id="10009"/>
<dbReference type="DisGeNET" id="10009"/>
<dbReference type="GeneCards" id="ZBTB33"/>
<dbReference type="HGNC" id="HGNC:16682">
    <property type="gene designation" value="ZBTB33"/>
</dbReference>
<dbReference type="HPA" id="ENSG00000177485">
    <property type="expression patterns" value="Low tissue specificity"/>
</dbReference>
<dbReference type="MalaCards" id="ZBTB33"/>
<dbReference type="MIM" id="300329">
    <property type="type" value="gene"/>
</dbReference>
<dbReference type="neXtProt" id="NX_Q86T24"/>
<dbReference type="OpenTargets" id="ENSG00000177485"/>
<dbReference type="PharmGKB" id="PA134928604"/>
<dbReference type="VEuPathDB" id="HostDB:ENSG00000177485"/>
<dbReference type="eggNOG" id="KOG1721">
    <property type="taxonomic scope" value="Eukaryota"/>
</dbReference>
<dbReference type="GeneTree" id="ENSGT00940000157481"/>
<dbReference type="HOGENOM" id="CLU_024688_0_0_1"/>
<dbReference type="InParanoid" id="Q86T24"/>
<dbReference type="OMA" id="VTQVQPN"/>
<dbReference type="OrthoDB" id="6359816at2759"/>
<dbReference type="PAN-GO" id="Q86T24">
    <property type="GO annotations" value="4 GO annotations based on evolutionary models"/>
</dbReference>
<dbReference type="PhylomeDB" id="Q86T24"/>
<dbReference type="TreeFam" id="TF333100"/>
<dbReference type="PathwayCommons" id="Q86T24"/>
<dbReference type="SignaLink" id="Q86T24"/>
<dbReference type="SIGNOR" id="Q86T24"/>
<dbReference type="BioGRID-ORCS" id="10009">
    <property type="hits" value="11 hits in 840 CRISPR screens"/>
</dbReference>
<dbReference type="ChiTaRS" id="ZBTB33">
    <property type="organism name" value="human"/>
</dbReference>
<dbReference type="EvolutionaryTrace" id="Q86T24"/>
<dbReference type="GeneWiki" id="ZBTB33"/>
<dbReference type="GenomeRNAi" id="10009"/>
<dbReference type="Pharos" id="Q86T24">
    <property type="development level" value="Tbio"/>
</dbReference>
<dbReference type="PRO" id="PR:Q86T24"/>
<dbReference type="Proteomes" id="UP000005640">
    <property type="component" value="Chromosome X"/>
</dbReference>
<dbReference type="RNAct" id="Q86T24">
    <property type="molecule type" value="protein"/>
</dbReference>
<dbReference type="Bgee" id="ENSG00000177485">
    <property type="expression patterns" value="Expressed in secondary oocyte and 188 other cell types or tissues"/>
</dbReference>
<dbReference type="GO" id="GO:0000785">
    <property type="term" value="C:chromatin"/>
    <property type="evidence" value="ECO:0000247"/>
    <property type="project" value="NTNU_SB"/>
</dbReference>
<dbReference type="GO" id="GO:0005829">
    <property type="term" value="C:cytosol"/>
    <property type="evidence" value="ECO:0000314"/>
    <property type="project" value="HPA"/>
</dbReference>
<dbReference type="GO" id="GO:0005730">
    <property type="term" value="C:nucleolus"/>
    <property type="evidence" value="ECO:0000314"/>
    <property type="project" value="HPA"/>
</dbReference>
<dbReference type="GO" id="GO:0005654">
    <property type="term" value="C:nucleoplasm"/>
    <property type="evidence" value="ECO:0000314"/>
    <property type="project" value="HPA"/>
</dbReference>
<dbReference type="GO" id="GO:0005634">
    <property type="term" value="C:nucleus"/>
    <property type="evidence" value="ECO:0000304"/>
    <property type="project" value="ProtInc"/>
</dbReference>
<dbReference type="GO" id="GO:0005886">
    <property type="term" value="C:plasma membrane"/>
    <property type="evidence" value="ECO:0000314"/>
    <property type="project" value="HPA"/>
</dbReference>
<dbReference type="GO" id="GO:0000981">
    <property type="term" value="F:DNA-binding transcription factor activity, RNA polymerase II-specific"/>
    <property type="evidence" value="ECO:0000247"/>
    <property type="project" value="NTNU_SB"/>
</dbReference>
<dbReference type="GO" id="GO:0001227">
    <property type="term" value="F:DNA-binding transcription repressor activity, RNA polymerase II-specific"/>
    <property type="evidence" value="ECO:0000318"/>
    <property type="project" value="GO_Central"/>
</dbReference>
<dbReference type="GO" id="GO:0008327">
    <property type="term" value="F:methyl-CpG binding"/>
    <property type="evidence" value="ECO:0000314"/>
    <property type="project" value="UniProtKB"/>
</dbReference>
<dbReference type="GO" id="GO:0000978">
    <property type="term" value="F:RNA polymerase II cis-regulatory region sequence-specific DNA binding"/>
    <property type="evidence" value="ECO:0000318"/>
    <property type="project" value="GO_Central"/>
</dbReference>
<dbReference type="GO" id="GO:0043565">
    <property type="term" value="F:sequence-specific DNA binding"/>
    <property type="evidence" value="ECO:0000314"/>
    <property type="project" value="UniProtKB"/>
</dbReference>
<dbReference type="GO" id="GO:1990837">
    <property type="term" value="F:sequence-specific double-stranded DNA binding"/>
    <property type="evidence" value="ECO:0000314"/>
    <property type="project" value="ARUK-UCL"/>
</dbReference>
<dbReference type="GO" id="GO:0008270">
    <property type="term" value="F:zinc ion binding"/>
    <property type="evidence" value="ECO:0007669"/>
    <property type="project" value="UniProtKB-KW"/>
</dbReference>
<dbReference type="GO" id="GO:0035556">
    <property type="term" value="P:intracellular signal transduction"/>
    <property type="evidence" value="ECO:0000304"/>
    <property type="project" value="ProtInc"/>
</dbReference>
<dbReference type="GO" id="GO:0045892">
    <property type="term" value="P:negative regulation of DNA-templated transcription"/>
    <property type="evidence" value="ECO:0000314"/>
    <property type="project" value="UniProtKB"/>
</dbReference>
<dbReference type="GO" id="GO:0000122">
    <property type="term" value="P:negative regulation of transcription by RNA polymerase II"/>
    <property type="evidence" value="ECO:0000318"/>
    <property type="project" value="GO_Central"/>
</dbReference>
<dbReference type="GO" id="GO:0001817">
    <property type="term" value="P:regulation of cytokine production"/>
    <property type="evidence" value="ECO:0000318"/>
    <property type="project" value="GO_Central"/>
</dbReference>
<dbReference type="GO" id="GO:0002682">
    <property type="term" value="P:regulation of immune system process"/>
    <property type="evidence" value="ECO:0000318"/>
    <property type="project" value="GO_Central"/>
</dbReference>
<dbReference type="GO" id="GO:0016055">
    <property type="term" value="P:Wnt signaling pathway"/>
    <property type="evidence" value="ECO:0007669"/>
    <property type="project" value="UniProtKB-KW"/>
</dbReference>
<dbReference type="CDD" id="cd18219">
    <property type="entry name" value="BTB_POZ_ZBTB33_KAISO"/>
    <property type="match status" value="1"/>
</dbReference>
<dbReference type="FunFam" id="3.30.160.60:FF:000749">
    <property type="entry name" value="Transcriptional regulator Kaiso"/>
    <property type="match status" value="1"/>
</dbReference>
<dbReference type="FunFam" id="3.30.160.60:FF:001008">
    <property type="entry name" value="transcriptional regulator Kaiso isoform X1"/>
    <property type="match status" value="1"/>
</dbReference>
<dbReference type="FunFam" id="3.30.710.10:FF:000077">
    <property type="entry name" value="transcriptional regulator Kaiso isoform X1"/>
    <property type="match status" value="1"/>
</dbReference>
<dbReference type="FunFam" id="3.30.160.60:FF:000235">
    <property type="entry name" value="Zinc finger and BTB domain containing 38"/>
    <property type="match status" value="1"/>
</dbReference>
<dbReference type="Gene3D" id="3.30.160.60">
    <property type="entry name" value="Classic Zinc Finger"/>
    <property type="match status" value="3"/>
</dbReference>
<dbReference type="Gene3D" id="3.30.710.10">
    <property type="entry name" value="Potassium Channel Kv1.1, Chain A"/>
    <property type="match status" value="1"/>
</dbReference>
<dbReference type="InterPro" id="IPR000210">
    <property type="entry name" value="BTB/POZ_dom"/>
</dbReference>
<dbReference type="InterPro" id="IPR011333">
    <property type="entry name" value="SKP1/BTB/POZ_sf"/>
</dbReference>
<dbReference type="InterPro" id="IPR036236">
    <property type="entry name" value="Znf_C2H2_sf"/>
</dbReference>
<dbReference type="InterPro" id="IPR013087">
    <property type="entry name" value="Znf_C2H2_type"/>
</dbReference>
<dbReference type="InterPro" id="IPR050457">
    <property type="entry name" value="ZnFinger_BTB_dom_contain"/>
</dbReference>
<dbReference type="PANTHER" id="PTHR46105">
    <property type="entry name" value="AGAP004733-PA"/>
    <property type="match status" value="1"/>
</dbReference>
<dbReference type="PANTHER" id="PTHR46105:SF27">
    <property type="entry name" value="TRANSCRIPTIONAL REGULATOR KAISO"/>
    <property type="match status" value="1"/>
</dbReference>
<dbReference type="Pfam" id="PF00651">
    <property type="entry name" value="BTB"/>
    <property type="match status" value="1"/>
</dbReference>
<dbReference type="SMART" id="SM00225">
    <property type="entry name" value="BTB"/>
    <property type="match status" value="1"/>
</dbReference>
<dbReference type="SMART" id="SM00355">
    <property type="entry name" value="ZnF_C2H2"/>
    <property type="match status" value="3"/>
</dbReference>
<dbReference type="SUPFAM" id="SSF57667">
    <property type="entry name" value="beta-beta-alpha zinc fingers"/>
    <property type="match status" value="2"/>
</dbReference>
<dbReference type="SUPFAM" id="SSF54695">
    <property type="entry name" value="POZ domain"/>
    <property type="match status" value="1"/>
</dbReference>
<dbReference type="PROSITE" id="PS50097">
    <property type="entry name" value="BTB"/>
    <property type="match status" value="1"/>
</dbReference>
<dbReference type="PROSITE" id="PS00028">
    <property type="entry name" value="ZINC_FINGER_C2H2_1"/>
    <property type="match status" value="3"/>
</dbReference>
<dbReference type="PROSITE" id="PS50157">
    <property type="entry name" value="ZINC_FINGER_C2H2_2"/>
    <property type="match status" value="3"/>
</dbReference>
<evidence type="ECO:0000250" key="1"/>
<evidence type="ECO:0000250" key="2">
    <source>
        <dbReference type="UniProtKB" id="Q8BN78"/>
    </source>
</evidence>
<evidence type="ECO:0000255" key="3">
    <source>
        <dbReference type="PROSITE-ProRule" id="PRU00037"/>
    </source>
</evidence>
<evidence type="ECO:0000255" key="4">
    <source>
        <dbReference type="PROSITE-ProRule" id="PRU00042"/>
    </source>
</evidence>
<evidence type="ECO:0000256" key="5">
    <source>
        <dbReference type="SAM" id="MobiDB-lite"/>
    </source>
</evidence>
<evidence type="ECO:0000269" key="6">
    <source>
    </source>
</evidence>
<evidence type="ECO:0000269" key="7">
    <source>
    </source>
</evidence>
<evidence type="ECO:0000269" key="8">
    <source>
    </source>
</evidence>
<evidence type="ECO:0000269" key="9">
    <source>
    </source>
</evidence>
<evidence type="ECO:0000269" key="10">
    <source>
    </source>
</evidence>
<evidence type="ECO:0000269" key="11">
    <source>
    </source>
</evidence>
<evidence type="ECO:0000269" key="12">
    <source>
    </source>
</evidence>
<evidence type="ECO:0000269" key="13">
    <source>
    </source>
</evidence>
<evidence type="ECO:0000269" key="14">
    <source>
    </source>
</evidence>
<evidence type="ECO:0000269" key="15">
    <source>
    </source>
</evidence>
<evidence type="ECO:0000305" key="16"/>
<evidence type="ECO:0007744" key="17">
    <source>
    </source>
</evidence>
<evidence type="ECO:0007744" key="18">
    <source>
    </source>
</evidence>
<evidence type="ECO:0007744" key="19">
    <source>
    </source>
</evidence>
<evidence type="ECO:0007829" key="20">
    <source>
        <dbReference type="PDB" id="3FKC"/>
    </source>
</evidence>
<evidence type="ECO:0007829" key="21">
    <source>
        <dbReference type="PDB" id="3M4T"/>
    </source>
</evidence>
<evidence type="ECO:0007829" key="22">
    <source>
        <dbReference type="PDB" id="5VMY"/>
    </source>
</evidence>
<evidence type="ECO:0007829" key="23">
    <source>
        <dbReference type="PDB" id="6DFB"/>
    </source>
</evidence>
<organism>
    <name type="scientific">Homo sapiens</name>
    <name type="common">Human</name>
    <dbReference type="NCBI Taxonomy" id="9606"/>
    <lineage>
        <taxon>Eukaryota</taxon>
        <taxon>Metazoa</taxon>
        <taxon>Chordata</taxon>
        <taxon>Craniata</taxon>
        <taxon>Vertebrata</taxon>
        <taxon>Euteleostomi</taxon>
        <taxon>Mammalia</taxon>
        <taxon>Eutheria</taxon>
        <taxon>Euarchontoglires</taxon>
        <taxon>Primates</taxon>
        <taxon>Haplorrhini</taxon>
        <taxon>Catarrhini</taxon>
        <taxon>Hominidae</taxon>
        <taxon>Homo</taxon>
    </lineage>
</organism>
<reference key="1">
    <citation type="journal article" date="2004" name="Nat. Genet.">
        <title>Complete sequencing and characterization of 21,243 full-length human cDNAs.</title>
        <authorList>
            <person name="Ota T."/>
            <person name="Suzuki Y."/>
            <person name="Nishikawa T."/>
            <person name="Otsuki T."/>
            <person name="Sugiyama T."/>
            <person name="Irie R."/>
            <person name="Wakamatsu A."/>
            <person name="Hayashi K."/>
            <person name="Sato H."/>
            <person name="Nagai K."/>
            <person name="Kimura K."/>
            <person name="Makita H."/>
            <person name="Sekine M."/>
            <person name="Obayashi M."/>
            <person name="Nishi T."/>
            <person name="Shibahara T."/>
            <person name="Tanaka T."/>
            <person name="Ishii S."/>
            <person name="Yamamoto J."/>
            <person name="Saito K."/>
            <person name="Kawai Y."/>
            <person name="Isono Y."/>
            <person name="Nakamura Y."/>
            <person name="Nagahari K."/>
            <person name="Murakami K."/>
            <person name="Yasuda T."/>
            <person name="Iwayanagi T."/>
            <person name="Wagatsuma M."/>
            <person name="Shiratori A."/>
            <person name="Sudo H."/>
            <person name="Hosoiri T."/>
            <person name="Kaku Y."/>
            <person name="Kodaira H."/>
            <person name="Kondo H."/>
            <person name="Sugawara M."/>
            <person name="Takahashi M."/>
            <person name="Kanda K."/>
            <person name="Yokoi T."/>
            <person name="Furuya T."/>
            <person name="Kikkawa E."/>
            <person name="Omura Y."/>
            <person name="Abe K."/>
            <person name="Kamihara K."/>
            <person name="Katsuta N."/>
            <person name="Sato K."/>
            <person name="Tanikawa M."/>
            <person name="Yamazaki M."/>
            <person name="Ninomiya K."/>
            <person name="Ishibashi T."/>
            <person name="Yamashita H."/>
            <person name="Murakawa K."/>
            <person name="Fujimori K."/>
            <person name="Tanai H."/>
            <person name="Kimata M."/>
            <person name="Watanabe M."/>
            <person name="Hiraoka S."/>
            <person name="Chiba Y."/>
            <person name="Ishida S."/>
            <person name="Ono Y."/>
            <person name="Takiguchi S."/>
            <person name="Watanabe S."/>
            <person name="Yosida M."/>
            <person name="Hotuta T."/>
            <person name="Kusano J."/>
            <person name="Kanehori K."/>
            <person name="Takahashi-Fujii A."/>
            <person name="Hara H."/>
            <person name="Tanase T.-O."/>
            <person name="Nomura Y."/>
            <person name="Togiya S."/>
            <person name="Komai F."/>
            <person name="Hara R."/>
            <person name="Takeuchi K."/>
            <person name="Arita M."/>
            <person name="Imose N."/>
            <person name="Musashino K."/>
            <person name="Yuuki H."/>
            <person name="Oshima A."/>
            <person name="Sasaki N."/>
            <person name="Aotsuka S."/>
            <person name="Yoshikawa Y."/>
            <person name="Matsunawa H."/>
            <person name="Ichihara T."/>
            <person name="Shiohata N."/>
            <person name="Sano S."/>
            <person name="Moriya S."/>
            <person name="Momiyama H."/>
            <person name="Satoh N."/>
            <person name="Takami S."/>
            <person name="Terashima Y."/>
            <person name="Suzuki O."/>
            <person name="Nakagawa S."/>
            <person name="Senoh A."/>
            <person name="Mizoguchi H."/>
            <person name="Goto Y."/>
            <person name="Shimizu F."/>
            <person name="Wakebe H."/>
            <person name="Hishigaki H."/>
            <person name="Watanabe T."/>
            <person name="Sugiyama A."/>
            <person name="Takemoto M."/>
            <person name="Kawakami B."/>
            <person name="Yamazaki M."/>
            <person name="Watanabe K."/>
            <person name="Kumagai A."/>
            <person name="Itakura S."/>
            <person name="Fukuzumi Y."/>
            <person name="Fujimori Y."/>
            <person name="Komiyama M."/>
            <person name="Tashiro H."/>
            <person name="Tanigami A."/>
            <person name="Fujiwara T."/>
            <person name="Ono T."/>
            <person name="Yamada K."/>
            <person name="Fujii Y."/>
            <person name="Ozaki K."/>
            <person name="Hirao M."/>
            <person name="Ohmori Y."/>
            <person name="Kawabata A."/>
            <person name="Hikiji T."/>
            <person name="Kobatake N."/>
            <person name="Inagaki H."/>
            <person name="Ikema Y."/>
            <person name="Okamoto S."/>
            <person name="Okitani R."/>
            <person name="Kawakami T."/>
            <person name="Noguchi S."/>
            <person name="Itoh T."/>
            <person name="Shigeta K."/>
            <person name="Senba T."/>
            <person name="Matsumura K."/>
            <person name="Nakajima Y."/>
            <person name="Mizuno T."/>
            <person name="Morinaga M."/>
            <person name="Sasaki M."/>
            <person name="Togashi T."/>
            <person name="Oyama M."/>
            <person name="Hata H."/>
            <person name="Watanabe M."/>
            <person name="Komatsu T."/>
            <person name="Mizushima-Sugano J."/>
            <person name="Satoh T."/>
            <person name="Shirai Y."/>
            <person name="Takahashi Y."/>
            <person name="Nakagawa K."/>
            <person name="Okumura K."/>
            <person name="Nagase T."/>
            <person name="Nomura N."/>
            <person name="Kikuchi H."/>
            <person name="Masuho Y."/>
            <person name="Yamashita R."/>
            <person name="Nakai K."/>
            <person name="Yada T."/>
            <person name="Nakamura Y."/>
            <person name="Ohara O."/>
            <person name="Isogai T."/>
            <person name="Sugano S."/>
        </authorList>
    </citation>
    <scope>NUCLEOTIDE SEQUENCE [LARGE SCALE MRNA]</scope>
    <source>
        <tissue>Cerebellum</tissue>
    </source>
</reference>
<reference key="2">
    <citation type="journal article" date="2007" name="BMC Genomics">
        <title>The full-ORF clone resource of the German cDNA consortium.</title>
        <authorList>
            <person name="Bechtel S."/>
            <person name="Rosenfelder H."/>
            <person name="Duda A."/>
            <person name="Schmidt C.P."/>
            <person name="Ernst U."/>
            <person name="Wellenreuther R."/>
            <person name="Mehrle A."/>
            <person name="Schuster C."/>
            <person name="Bahr A."/>
            <person name="Bloecker H."/>
            <person name="Heubner D."/>
            <person name="Hoerlein A."/>
            <person name="Michel G."/>
            <person name="Wedler H."/>
            <person name="Koehrer K."/>
            <person name="Ottenwaelder B."/>
            <person name="Poustka A."/>
            <person name="Wiemann S."/>
            <person name="Schupp I."/>
        </authorList>
    </citation>
    <scope>NUCLEOTIDE SEQUENCE [LARGE SCALE MRNA]</scope>
    <source>
        <tissue>Amygdala</tissue>
        <tissue>Endometrial tumor</tissue>
        <tissue>Fetal kidney</tissue>
    </source>
</reference>
<reference key="3">
    <citation type="journal article" date="2005" name="Nature">
        <title>The DNA sequence of the human X chromosome.</title>
        <authorList>
            <person name="Ross M.T."/>
            <person name="Grafham D.V."/>
            <person name="Coffey A.J."/>
            <person name="Scherer S."/>
            <person name="McLay K."/>
            <person name="Muzny D."/>
            <person name="Platzer M."/>
            <person name="Howell G.R."/>
            <person name="Burrows C."/>
            <person name="Bird C.P."/>
            <person name="Frankish A."/>
            <person name="Lovell F.L."/>
            <person name="Howe K.L."/>
            <person name="Ashurst J.L."/>
            <person name="Fulton R.S."/>
            <person name="Sudbrak R."/>
            <person name="Wen G."/>
            <person name="Jones M.C."/>
            <person name="Hurles M.E."/>
            <person name="Andrews T.D."/>
            <person name="Scott C.E."/>
            <person name="Searle S."/>
            <person name="Ramser J."/>
            <person name="Whittaker A."/>
            <person name="Deadman R."/>
            <person name="Carter N.P."/>
            <person name="Hunt S.E."/>
            <person name="Chen R."/>
            <person name="Cree A."/>
            <person name="Gunaratne P."/>
            <person name="Havlak P."/>
            <person name="Hodgson A."/>
            <person name="Metzker M.L."/>
            <person name="Richards S."/>
            <person name="Scott G."/>
            <person name="Steffen D."/>
            <person name="Sodergren E."/>
            <person name="Wheeler D.A."/>
            <person name="Worley K.C."/>
            <person name="Ainscough R."/>
            <person name="Ambrose K.D."/>
            <person name="Ansari-Lari M.A."/>
            <person name="Aradhya S."/>
            <person name="Ashwell R.I."/>
            <person name="Babbage A.K."/>
            <person name="Bagguley C.L."/>
            <person name="Ballabio A."/>
            <person name="Banerjee R."/>
            <person name="Barker G.E."/>
            <person name="Barlow K.F."/>
            <person name="Barrett I.P."/>
            <person name="Bates K.N."/>
            <person name="Beare D.M."/>
            <person name="Beasley H."/>
            <person name="Beasley O."/>
            <person name="Beck A."/>
            <person name="Bethel G."/>
            <person name="Blechschmidt K."/>
            <person name="Brady N."/>
            <person name="Bray-Allen S."/>
            <person name="Bridgeman A.M."/>
            <person name="Brown A.J."/>
            <person name="Brown M.J."/>
            <person name="Bonnin D."/>
            <person name="Bruford E.A."/>
            <person name="Buhay C."/>
            <person name="Burch P."/>
            <person name="Burford D."/>
            <person name="Burgess J."/>
            <person name="Burrill W."/>
            <person name="Burton J."/>
            <person name="Bye J.M."/>
            <person name="Carder C."/>
            <person name="Carrel L."/>
            <person name="Chako J."/>
            <person name="Chapman J.C."/>
            <person name="Chavez D."/>
            <person name="Chen E."/>
            <person name="Chen G."/>
            <person name="Chen Y."/>
            <person name="Chen Z."/>
            <person name="Chinault C."/>
            <person name="Ciccodicola A."/>
            <person name="Clark S.Y."/>
            <person name="Clarke G."/>
            <person name="Clee C.M."/>
            <person name="Clegg S."/>
            <person name="Clerc-Blankenburg K."/>
            <person name="Clifford K."/>
            <person name="Cobley V."/>
            <person name="Cole C.G."/>
            <person name="Conquer J.S."/>
            <person name="Corby N."/>
            <person name="Connor R.E."/>
            <person name="David R."/>
            <person name="Davies J."/>
            <person name="Davis C."/>
            <person name="Davis J."/>
            <person name="Delgado O."/>
            <person name="Deshazo D."/>
            <person name="Dhami P."/>
            <person name="Ding Y."/>
            <person name="Dinh H."/>
            <person name="Dodsworth S."/>
            <person name="Draper H."/>
            <person name="Dugan-Rocha S."/>
            <person name="Dunham A."/>
            <person name="Dunn M."/>
            <person name="Durbin K.J."/>
            <person name="Dutta I."/>
            <person name="Eades T."/>
            <person name="Ellwood M."/>
            <person name="Emery-Cohen A."/>
            <person name="Errington H."/>
            <person name="Evans K.L."/>
            <person name="Faulkner L."/>
            <person name="Francis F."/>
            <person name="Frankland J."/>
            <person name="Fraser A.E."/>
            <person name="Galgoczy P."/>
            <person name="Gilbert J."/>
            <person name="Gill R."/>
            <person name="Gloeckner G."/>
            <person name="Gregory S.G."/>
            <person name="Gribble S."/>
            <person name="Griffiths C."/>
            <person name="Grocock R."/>
            <person name="Gu Y."/>
            <person name="Gwilliam R."/>
            <person name="Hamilton C."/>
            <person name="Hart E.A."/>
            <person name="Hawes A."/>
            <person name="Heath P.D."/>
            <person name="Heitmann K."/>
            <person name="Hennig S."/>
            <person name="Hernandez J."/>
            <person name="Hinzmann B."/>
            <person name="Ho S."/>
            <person name="Hoffs M."/>
            <person name="Howden P.J."/>
            <person name="Huckle E.J."/>
            <person name="Hume J."/>
            <person name="Hunt P.J."/>
            <person name="Hunt A.R."/>
            <person name="Isherwood J."/>
            <person name="Jacob L."/>
            <person name="Johnson D."/>
            <person name="Jones S."/>
            <person name="de Jong P.J."/>
            <person name="Joseph S.S."/>
            <person name="Keenan S."/>
            <person name="Kelly S."/>
            <person name="Kershaw J.K."/>
            <person name="Khan Z."/>
            <person name="Kioschis P."/>
            <person name="Klages S."/>
            <person name="Knights A.J."/>
            <person name="Kosiura A."/>
            <person name="Kovar-Smith C."/>
            <person name="Laird G.K."/>
            <person name="Langford C."/>
            <person name="Lawlor S."/>
            <person name="Leversha M."/>
            <person name="Lewis L."/>
            <person name="Liu W."/>
            <person name="Lloyd C."/>
            <person name="Lloyd D.M."/>
            <person name="Loulseged H."/>
            <person name="Loveland J.E."/>
            <person name="Lovell J.D."/>
            <person name="Lozado R."/>
            <person name="Lu J."/>
            <person name="Lyne R."/>
            <person name="Ma J."/>
            <person name="Maheshwari M."/>
            <person name="Matthews L.H."/>
            <person name="McDowall J."/>
            <person name="McLaren S."/>
            <person name="McMurray A."/>
            <person name="Meidl P."/>
            <person name="Meitinger T."/>
            <person name="Milne S."/>
            <person name="Miner G."/>
            <person name="Mistry S.L."/>
            <person name="Morgan M."/>
            <person name="Morris S."/>
            <person name="Mueller I."/>
            <person name="Mullikin J.C."/>
            <person name="Nguyen N."/>
            <person name="Nordsiek G."/>
            <person name="Nyakatura G."/>
            <person name="O'dell C.N."/>
            <person name="Okwuonu G."/>
            <person name="Palmer S."/>
            <person name="Pandian R."/>
            <person name="Parker D."/>
            <person name="Parrish J."/>
            <person name="Pasternak S."/>
            <person name="Patel D."/>
            <person name="Pearce A.V."/>
            <person name="Pearson D.M."/>
            <person name="Pelan S.E."/>
            <person name="Perez L."/>
            <person name="Porter K.M."/>
            <person name="Ramsey Y."/>
            <person name="Reichwald K."/>
            <person name="Rhodes S."/>
            <person name="Ridler K.A."/>
            <person name="Schlessinger D."/>
            <person name="Schueler M.G."/>
            <person name="Sehra H.K."/>
            <person name="Shaw-Smith C."/>
            <person name="Shen H."/>
            <person name="Sheridan E.M."/>
            <person name="Shownkeen R."/>
            <person name="Skuce C.D."/>
            <person name="Smith M.L."/>
            <person name="Sotheran E.C."/>
            <person name="Steingruber H.E."/>
            <person name="Steward C.A."/>
            <person name="Storey R."/>
            <person name="Swann R.M."/>
            <person name="Swarbreck D."/>
            <person name="Tabor P.E."/>
            <person name="Taudien S."/>
            <person name="Taylor T."/>
            <person name="Teague B."/>
            <person name="Thomas K."/>
            <person name="Thorpe A."/>
            <person name="Timms K."/>
            <person name="Tracey A."/>
            <person name="Trevanion S."/>
            <person name="Tromans A.C."/>
            <person name="d'Urso M."/>
            <person name="Verduzco D."/>
            <person name="Villasana D."/>
            <person name="Waldron L."/>
            <person name="Wall M."/>
            <person name="Wang Q."/>
            <person name="Warren J."/>
            <person name="Warry G.L."/>
            <person name="Wei X."/>
            <person name="West A."/>
            <person name="Whitehead S.L."/>
            <person name="Whiteley M.N."/>
            <person name="Wilkinson J.E."/>
            <person name="Willey D.L."/>
            <person name="Williams G."/>
            <person name="Williams L."/>
            <person name="Williamson A."/>
            <person name="Williamson H."/>
            <person name="Wilming L."/>
            <person name="Woodmansey R.L."/>
            <person name="Wray P.W."/>
            <person name="Yen J."/>
            <person name="Zhang J."/>
            <person name="Zhou J."/>
            <person name="Zoghbi H."/>
            <person name="Zorilla S."/>
            <person name="Buck D."/>
            <person name="Reinhardt R."/>
            <person name="Poustka A."/>
            <person name="Rosenthal A."/>
            <person name="Lehrach H."/>
            <person name="Meindl A."/>
            <person name="Minx P.J."/>
            <person name="Hillier L.W."/>
            <person name="Willard H.F."/>
            <person name="Wilson R.K."/>
            <person name="Waterston R.H."/>
            <person name="Rice C.M."/>
            <person name="Vaudin M."/>
            <person name="Coulson A."/>
            <person name="Nelson D.L."/>
            <person name="Weinstock G."/>
            <person name="Sulston J.E."/>
            <person name="Durbin R.M."/>
            <person name="Hubbard T."/>
            <person name="Gibbs R.A."/>
            <person name="Beck S."/>
            <person name="Rogers J."/>
            <person name="Bentley D.R."/>
        </authorList>
    </citation>
    <scope>NUCLEOTIDE SEQUENCE [LARGE SCALE GENOMIC DNA]</scope>
</reference>
<reference key="4">
    <citation type="submission" date="2005-09" db="EMBL/GenBank/DDBJ databases">
        <authorList>
            <person name="Mural R.J."/>
            <person name="Istrail S."/>
            <person name="Sutton G.G."/>
            <person name="Florea L."/>
            <person name="Halpern A.L."/>
            <person name="Mobarry C.M."/>
            <person name="Lippert R."/>
            <person name="Walenz B."/>
            <person name="Shatkay H."/>
            <person name="Dew I."/>
            <person name="Miller J.R."/>
            <person name="Flanigan M.J."/>
            <person name="Edwards N.J."/>
            <person name="Bolanos R."/>
            <person name="Fasulo D."/>
            <person name="Halldorsson B.V."/>
            <person name="Hannenhalli S."/>
            <person name="Turner R."/>
            <person name="Yooseph S."/>
            <person name="Lu F."/>
            <person name="Nusskern D.R."/>
            <person name="Shue B.C."/>
            <person name="Zheng X.H."/>
            <person name="Zhong F."/>
            <person name="Delcher A.L."/>
            <person name="Huson D.H."/>
            <person name="Kravitz S.A."/>
            <person name="Mouchard L."/>
            <person name="Reinert K."/>
            <person name="Remington K.A."/>
            <person name="Clark A.G."/>
            <person name="Waterman M.S."/>
            <person name="Eichler E.E."/>
            <person name="Adams M.D."/>
            <person name="Hunkapiller M.W."/>
            <person name="Myers E.W."/>
            <person name="Venter J.C."/>
        </authorList>
    </citation>
    <scope>NUCLEOTIDE SEQUENCE [LARGE SCALE GENOMIC DNA]</scope>
</reference>
<reference key="5">
    <citation type="journal article" date="2004" name="Genome Res.">
        <title>The status, quality, and expansion of the NIH full-length cDNA project: the Mammalian Gene Collection (MGC).</title>
        <authorList>
            <consortium name="The MGC Project Team"/>
        </authorList>
    </citation>
    <scope>NUCLEOTIDE SEQUENCE [LARGE SCALE MRNA]</scope>
    <source>
        <tissue>Testis</tissue>
    </source>
</reference>
<reference key="6">
    <citation type="journal article" date="1999" name="Mol. Cell. Biol.">
        <title>The catenin p120(ctn) interacts with Kaiso, a novel BTB/POZ domain zinc finger transcription factor.</title>
        <authorList>
            <person name="Daniel J.M."/>
            <person name="Reynolds A.B."/>
        </authorList>
    </citation>
    <scope>INTERACTION WITH CTNND1</scope>
</reference>
<reference key="7">
    <citation type="journal article" date="2001" name="Genes Dev.">
        <title>The p120 catenin partner Kaiso is a DNA methylation-dependent transcriptional repressor.</title>
        <authorList>
            <person name="Prokhortchouk A."/>
            <person name="Hendrich B."/>
            <person name="Joergensen H."/>
            <person name="Ruzov A."/>
            <person name="Wilm M."/>
            <person name="Georgiev G."/>
            <person name="Bird A."/>
            <person name="Prokhortchouk E."/>
        </authorList>
    </citation>
    <scope>FUNCTION</scope>
    <scope>DNA-BINDING</scope>
    <scope>IDENTIFICATION BY MASS SPECTROMETRY</scope>
</reference>
<reference key="8">
    <citation type="journal article" date="2003" name="Mol. Cell">
        <title>N-CoR mediates DNA methylation-dependent repression through a methyl CpG binding protein Kaiso.</title>
        <authorList>
            <person name="Yoon H.-G."/>
            <person name="Chan D.W."/>
            <person name="Reynolds A.B."/>
            <person name="Qin J."/>
            <person name="Wong J."/>
        </authorList>
    </citation>
    <scope>FUNCTION</scope>
    <scope>DNA-BINDING</scope>
    <scope>INTERACTION WITH NCOR1</scope>
    <scope>IDENTIFICATION BY MASS SPECTROMETRY</scope>
</reference>
<reference key="9">
    <citation type="journal article" date="2004" name="Development">
        <title>Kaiso is a genome-wide repressor of transcription that is essential for amphibian development.</title>
        <authorList>
            <person name="Ruzov A."/>
            <person name="Dunican D.S."/>
            <person name="Prokhortchouk A."/>
            <person name="Pennings S."/>
            <person name="Stancheva I."/>
            <person name="Prokhortchouk E."/>
            <person name="Meehan R.R."/>
        </authorList>
    </citation>
    <scope>FUNCTION</scope>
    <scope>DNA-BINDING</scope>
    <scope>MUTAGENESIS OF CYS-552</scope>
    <source>
        <tissue>Lung</tissue>
    </source>
</reference>
<reference key="10">
    <citation type="journal article" date="2004" name="J. Biol. Chem.">
        <title>Laminar shear stress differentially modulates gene expression of p120 catenin, Kaiso transcription factor, and vascular endothelial cadherin in human coronary artery endothelial cells.</title>
        <authorList>
            <person name="Kondapalli J."/>
            <person name="Flozak A.S."/>
            <person name="Albuquerque M.L.C."/>
        </authorList>
    </citation>
    <scope>TISSUE SPECIFICITY</scope>
    <scope>INDUCTION</scope>
</reference>
<reference key="11">
    <citation type="journal article" date="2004" name="J. Cell Sci.">
        <title>Nuclear import of the BTB/POZ transcriptional regulator Kaiso.</title>
        <authorList>
            <person name="Kelly K.F."/>
            <person name="Otchere A.A."/>
            <person name="Graham M."/>
            <person name="Daniel J.M."/>
        </authorList>
    </citation>
    <scope>INTERACTION WITH KPNA2</scope>
</reference>
<reference key="12">
    <citation type="journal article" date="2005" name="Cancer Res.">
        <title>Expression and nuclear location of the transcriptional repressor Kaiso is regulated by the tumor microenvironment.</title>
        <authorList>
            <person name="Soubry A."/>
            <person name="van Hengel J."/>
            <person name="Parthoens E."/>
            <person name="Colpaert C."/>
            <person name="Van Marck E."/>
            <person name="Waltregny D."/>
            <person name="Reynolds A.B."/>
            <person name="van Roy F."/>
        </authorList>
    </citation>
    <scope>SUBCELLULAR LOCATION</scope>
</reference>
<reference key="13">
    <citation type="journal article" date="2005" name="Exp. Cell Res.">
        <title>The catenin p120ctn inhibits Kaiso-mediated transcriptional repression of the beta-catenin/TCF target gene matrilysin.</title>
        <authorList>
            <person name="Spring C.M."/>
            <person name="Kelly K.F."/>
            <person name="O'Kelly I."/>
            <person name="Graham M."/>
            <person name="Crawford H.C."/>
            <person name="Daniel J.M."/>
        </authorList>
    </citation>
    <scope>FUNCTION</scope>
</reference>
<reference key="14">
    <citation type="journal article" date="2006" name="Mol. Cell. Biol.">
        <title>A family of human zinc finger proteins that bind methylated DNA and repress transcription.</title>
        <authorList>
            <person name="Filion G.J."/>
            <person name="Zhenilo S."/>
            <person name="Salozhin S."/>
            <person name="Yamada D."/>
            <person name="Prokhortchouk E."/>
            <person name="Defossez P.A."/>
        </authorList>
    </citation>
    <scope>FUNCTION</scope>
    <scope>DNA-BINDING</scope>
    <scope>SUBCELLULAR LOCATION</scope>
    <scope>INTERACTION WITH CTNND1</scope>
</reference>
<reference key="15">
    <citation type="journal article" date="2009" name="Anal. Chem.">
        <title>Lys-N and trypsin cover complementary parts of the phosphoproteome in a refined SCX-based approach.</title>
        <authorList>
            <person name="Gauci S."/>
            <person name="Helbig A.O."/>
            <person name="Slijper M."/>
            <person name="Krijgsveld J."/>
            <person name="Heck A.J."/>
            <person name="Mohammed S."/>
        </authorList>
    </citation>
    <scope>IDENTIFICATION BY MASS SPECTROMETRY [LARGE SCALE ANALYSIS]</scope>
</reference>
<reference key="16">
    <citation type="journal article" date="2012" name="PLoS ONE">
        <title>Kaiso directs the transcriptional corepressor MTG16 to the Kaiso binding site in target promoters.</title>
        <authorList>
            <person name="Barrett C.W."/>
            <person name="Smith J.J."/>
            <person name="Lu L.C."/>
            <person name="Markham N."/>
            <person name="Stengel K.R."/>
            <person name="Short S.P."/>
            <person name="Zhang B."/>
            <person name="Hunt A.A."/>
            <person name="Fingleton B.M."/>
            <person name="Carnahan R.H."/>
            <person name="Engel M.E."/>
            <person name="Chen X."/>
            <person name="Beauchamp R.D."/>
            <person name="Wilson K.T."/>
            <person name="Hiebert S.W."/>
            <person name="Reynolds A.B."/>
            <person name="Williams C.S."/>
        </authorList>
    </citation>
    <scope>FUNCTION</scope>
    <scope>INTERACTION WITH CBFA2T3</scope>
</reference>
<reference key="17">
    <citation type="journal article" date="2013" name="J. Proteome Res.">
        <title>Toward a comprehensive characterization of a human cancer cell phosphoproteome.</title>
        <authorList>
            <person name="Zhou H."/>
            <person name="Di Palma S."/>
            <person name="Preisinger C."/>
            <person name="Peng M."/>
            <person name="Polat A.N."/>
            <person name="Heck A.J."/>
            <person name="Mohammed S."/>
        </authorList>
    </citation>
    <scope>PHOSPHORYLATION [LARGE SCALE ANALYSIS] AT THR-251</scope>
    <scope>IDENTIFICATION BY MASS SPECTROMETRY [LARGE SCALE ANALYSIS]</scope>
    <source>
        <tissue>Erythroleukemia</tissue>
    </source>
</reference>
<reference key="18">
    <citation type="journal article" date="2014" name="Nat. Struct. Mol. Biol.">
        <title>Uncovering global SUMOylation signaling networks in a site-specific manner.</title>
        <authorList>
            <person name="Hendriks I.A."/>
            <person name="D'Souza R.C."/>
            <person name="Yang B."/>
            <person name="Verlaan-de Vries M."/>
            <person name="Mann M."/>
            <person name="Vertegaal A.C."/>
        </authorList>
    </citation>
    <scope>SUMOYLATION [LARGE SCALE ANALYSIS] AT LYS-449; LYS-479 AND LYS-582</scope>
    <scope>IDENTIFICATION BY MASS SPECTROMETRY [LARGE SCALE ANALYSIS]</scope>
</reference>
<reference key="19">
    <citation type="journal article" date="2017" name="Nat. Struct. Mol. Biol.">
        <title>Site-specific mapping of the human SUMO proteome reveals co-modification with phosphorylation.</title>
        <authorList>
            <person name="Hendriks I.A."/>
            <person name="Lyon D."/>
            <person name="Young C."/>
            <person name="Jensen L.J."/>
            <person name="Vertegaal A.C."/>
            <person name="Nielsen M.L."/>
        </authorList>
    </citation>
    <scope>SUMOYLATION [LARGE SCALE ANALYSIS] AT LYS-151; LYS-153; LYS-390; LYS-407; LYS-414; LYS-449; LYS-465; LYS-474; LYS-479; LYS-539; LYS-570; LYS-582; LYS-611 AND LYS-618</scope>
    <scope>IDENTIFICATION BY MASS SPECTROMETRY [LARGE SCALE ANALYSIS]</scope>
</reference>
<reference key="20">
    <citation type="submission" date="2008-12" db="PDB data bank">
        <title>Crystal structure of human zinc finger and BTB domain containing 33.</title>
        <authorList>
            <consortium name="Structural genomics consortium (SGC)"/>
        </authorList>
    </citation>
    <scope>X-RAY CRYSTALLOGRAPHY (1.7 ANGSTROMS) OF 1-116</scope>
</reference>
<comment type="function">
    <text evidence="7 8 10 13 14 15">Transcriptional regulator with bimodal DNA-binding specificity. Binds to methylated CpG dinucleotides in the consensus sequence 5'-CGCG-3' and also binds to the non-methylated consensus sequence 5'-CTGCNA-3' also known as the consensus kaiso binding site (KBS). Recruits the N-CoR repressor complex to promote histone deacetylation and the formation of repressive chromatin structures in target gene promoters. May contribute to the repression of target genes of the Wnt signaling pathway. May also activate transcription of a subset of target genes by the recruitment of CTNND2. Represses expression of MMP7 in conjunction with transcriptional corepressors CBFA2T3, CBFA2T2 and RUNX1T1 (PubMed:23251453).</text>
</comment>
<comment type="subunit">
    <text evidence="2 6 8 11 14 15">Self-associates. Interacts with CTNND2 (By similarity). Interacts with CTNND1, and this interaction inhibits binding to both methylated and non-methylated DNA. Interacts with NCOR1. Interacts with KPNA2/RCH1, which may mediate nuclear import of this protein. Interacts with CBFA2T3.</text>
</comment>
<comment type="interaction">
    <interactant intactId="EBI-2515625">
        <id>Q86T24</id>
    </interactant>
    <interactant intactId="EBI-701927">
        <id>O60716</id>
        <label>CTNND1</label>
    </interactant>
    <organismsDiffer>false</organismsDiffer>
    <experiments>2</experiments>
</comment>
<comment type="interaction">
    <interactant intactId="EBI-2515625">
        <id>Q86T24</id>
    </interactant>
    <interactant intactId="EBI-701963">
        <id>O60716-5</id>
        <label>CTNND1</label>
    </interactant>
    <organismsDiffer>false</organismsDiffer>
    <experiments>3</experiments>
</comment>
<comment type="interaction">
    <interactant intactId="EBI-2515625">
        <id>Q86T24</id>
    </interactant>
    <interactant intactId="EBI-2798865">
        <id>P57764</id>
        <label>GSDMD</label>
    </interactant>
    <organismsDiffer>false</organismsDiffer>
    <experiments>3</experiments>
</comment>
<comment type="interaction">
    <interactant intactId="EBI-2515625">
        <id>Q86T24</id>
    </interactant>
    <interactant intactId="EBI-740553">
        <id>P13807</id>
        <label>GYS1</label>
    </interactant>
    <organismsDiffer>false</organismsDiffer>
    <experiments>3</experiments>
</comment>
<comment type="interaction">
    <interactant intactId="EBI-2515625">
        <id>Q86T24</id>
    </interactant>
    <interactant intactId="EBI-10297093">
        <id>Q9BRQ3</id>
        <label>NUDT22</label>
    </interactant>
    <organismsDiffer>false</organismsDiffer>
    <experiments>3</experiments>
</comment>
<comment type="interaction">
    <interactant intactId="EBI-2515625">
        <id>Q86T24</id>
    </interactant>
    <interactant intactId="EBI-473220">
        <id>P61956</id>
        <label>SUMO2</label>
    </interactant>
    <organismsDiffer>false</organismsDiffer>
    <experiments>3</experiments>
</comment>
<comment type="interaction">
    <interactant intactId="EBI-2515625">
        <id>Q86T24</id>
    </interactant>
    <interactant intactId="EBI-474067">
        <id>P55854</id>
        <label>SUMO3</label>
    </interactant>
    <organismsDiffer>false</organismsDiffer>
    <experiments>3</experiments>
</comment>
<comment type="interaction">
    <interactant intactId="EBI-2515625">
        <id>Q86T24</id>
    </interactant>
    <interactant intactId="EBI-11059915">
        <id>Q8N7C3</id>
        <label>TRIML2</label>
    </interactant>
    <organismsDiffer>false</organismsDiffer>
    <experiments>6</experiments>
</comment>
<comment type="subcellular location">
    <subcellularLocation>
        <location evidence="12 14">Nucleus</location>
    </subcellularLocation>
    <subcellularLocation>
        <location evidence="12">Cytoplasm</location>
    </subcellularLocation>
    <text>Also cytoplasmic in cells grown at high densities.</text>
</comment>
<comment type="tissue specificity">
    <text evidence="9">Expressed in vascular endothelium.</text>
</comment>
<comment type="induction">
    <text evidence="9">Induced in vascular endothelium by wounding. This effect is potentiated by prior laminar shear stress, which enhances wound closure.</text>
</comment>
<comment type="online information" name="Atlas of Genetics and Cytogenetics in Oncology and Haematology">
    <link uri="https://atlasgeneticsoncology.org/gene/43785/ZBTB33"/>
</comment>
<keyword id="KW-0002">3D-structure</keyword>
<keyword id="KW-0010">Activator</keyword>
<keyword id="KW-0963">Cytoplasm</keyword>
<keyword id="KW-0238">DNA-binding</keyword>
<keyword id="KW-1017">Isopeptide bond</keyword>
<keyword id="KW-0479">Metal-binding</keyword>
<keyword id="KW-0539">Nucleus</keyword>
<keyword id="KW-0597">Phosphoprotein</keyword>
<keyword id="KW-1267">Proteomics identification</keyword>
<keyword id="KW-1185">Reference proteome</keyword>
<keyword id="KW-0677">Repeat</keyword>
<keyword id="KW-0678">Repressor</keyword>
<keyword id="KW-0804">Transcription</keyword>
<keyword id="KW-0805">Transcription regulation</keyword>
<keyword id="KW-0832">Ubl conjugation</keyword>
<keyword id="KW-0879">Wnt signaling pathway</keyword>
<keyword id="KW-0862">Zinc</keyword>
<keyword id="KW-0863">Zinc-finger</keyword>
<sequence>MESRKLISATDIQYSGSLLNSLNEQRGHGLFCDVTVIVEDRKFRAHKNILSASSTYFHQLFSVAGQVVELSFIRAEIFAEILNYIYSSKIVRVRSDLLDELIKSGQLLGVKFIAELGVPLSQVKSISGTAQDGNTEPLPPDSGDKNLVIQKSKDEAQDNGATIMPIITESFSLSAEDYEMKKIIVTDSDDDDDDVIFCSEILPTKETLPSNNTVAQVQSNPGPVAISDVAPSASNNSPPLTNITPTQKLPTPVNQATLSQTQGSEKLLVSSAPTHLTPNIILLNQTPLSTPPNVSSSLPNHMPSSINLLVQNQQTPNSAILTGNKANEEEEEEIIDDDDDTISSSPDSAVSNTSLVPQADTSQNTSFDGSLIQKMQIPTLLQEPLSNSLKISDIITRNTNDPGVGSKHLMEGQKIITLDTATEIEGLSTGCKVYANIGEDTYDIVIPVKDDPDEGEARLENEIPKTSGSEMANKRMKVKHDDHYELIVDGRVYYICIVCKRSYVCLTSLRRHFNIHSWEKKYPCRYCEKVFPLAEYRTKHEIHHTGERRYQCLACGKSFINYQFMSSHIKSVHSQDPSGDSKLYRLHPCRSLQIRQYAYLSDRSSTIPAMKDDGIGYKVDTGKEPPVGTTTSTQNKPMTWEDIFIQQENDSIFKQNVTDGSTEFEFIIPESY</sequence>
<feature type="chain" id="PRO_0000046988" description="Transcriptional regulator Kaiso">
    <location>
        <begin position="1"/>
        <end position="672"/>
    </location>
</feature>
<feature type="domain" description="BTB" evidence="3">
    <location>
        <begin position="32"/>
        <end position="94"/>
    </location>
</feature>
<feature type="zinc finger region" description="C2H2-type 1" evidence="4">
    <location>
        <begin position="494"/>
        <end position="516"/>
    </location>
</feature>
<feature type="zinc finger region" description="C2H2-type 2" evidence="4">
    <location>
        <begin position="522"/>
        <end position="544"/>
    </location>
</feature>
<feature type="zinc finger region" description="C2H2-type 3" evidence="4">
    <location>
        <begin position="550"/>
        <end position="573"/>
    </location>
</feature>
<feature type="region of interest" description="Self-association" evidence="1">
    <location>
        <begin position="1"/>
        <end position="136"/>
    </location>
</feature>
<feature type="region of interest" description="Interaction with NCOR1" evidence="8">
    <location>
        <begin position="1"/>
        <end position="103"/>
    </location>
</feature>
<feature type="region of interest" description="Interaction with CBFA2T3" evidence="15">
    <location>
        <begin position="298"/>
        <end position="573"/>
    </location>
</feature>
<feature type="region of interest" description="Disordered" evidence="5">
    <location>
        <begin position="325"/>
        <end position="354"/>
    </location>
</feature>
<feature type="region of interest" description="Interaction with CTNND1" evidence="1">
    <location>
        <begin position="454"/>
        <end position="672"/>
    </location>
</feature>
<feature type="region of interest" description="Required for DNA-binding" evidence="1">
    <location>
        <begin position="514"/>
        <end position="638"/>
    </location>
</feature>
<feature type="region of interest" description="Disordered" evidence="5">
    <location>
        <begin position="616"/>
        <end position="635"/>
    </location>
</feature>
<feature type="short sequence motif" description="Nuclear localization signal" evidence="1">
    <location>
        <begin position="471"/>
        <end position="480"/>
    </location>
</feature>
<feature type="compositionally biased region" description="Acidic residues" evidence="5">
    <location>
        <begin position="328"/>
        <end position="341"/>
    </location>
</feature>
<feature type="modified residue" description="Phosphothreonine" evidence="17">
    <location>
        <position position="251"/>
    </location>
</feature>
<feature type="cross-link" description="Glycyl lysine isopeptide (Lys-Gly) (interchain with G-Cter in SUMO2)" evidence="19">
    <location>
        <position position="151"/>
    </location>
</feature>
<feature type="cross-link" description="Glycyl lysine isopeptide (Lys-Gly) (interchain with G-Cter in SUMO2)" evidence="19">
    <location>
        <position position="153"/>
    </location>
</feature>
<feature type="cross-link" description="Glycyl lysine isopeptide (Lys-Gly) (interchain with G-Cter in SUMO2)" evidence="19">
    <location>
        <position position="390"/>
    </location>
</feature>
<feature type="cross-link" description="Glycyl lysine isopeptide (Lys-Gly) (interchain with G-Cter in SUMO2)" evidence="19">
    <location>
        <position position="407"/>
    </location>
</feature>
<feature type="cross-link" description="Glycyl lysine isopeptide (Lys-Gly) (interchain with G-Cter in SUMO2)" evidence="19">
    <location>
        <position position="414"/>
    </location>
</feature>
<feature type="cross-link" description="Glycyl lysine isopeptide (Lys-Gly) (interchain with G-Cter in SUMO2)" evidence="18 19">
    <location>
        <position position="449"/>
    </location>
</feature>
<feature type="cross-link" description="Glycyl lysine isopeptide (Lys-Gly) (interchain with G-Cter in SUMO2)" evidence="19">
    <location>
        <position position="465"/>
    </location>
</feature>
<feature type="cross-link" description="Glycyl lysine isopeptide (Lys-Gly) (interchain with G-Cter in SUMO2)" evidence="19">
    <location>
        <position position="474"/>
    </location>
</feature>
<feature type="cross-link" description="Glycyl lysine isopeptide (Lys-Gly) (interchain with G-Cter in SUMO2)" evidence="18 19">
    <location>
        <position position="479"/>
    </location>
</feature>
<feature type="cross-link" description="Glycyl lysine isopeptide (Lys-Gly) (interchain with G-Cter in SUMO2)" evidence="19">
    <location>
        <position position="539"/>
    </location>
</feature>
<feature type="cross-link" description="Glycyl lysine isopeptide (Lys-Gly) (interchain with G-Cter in SUMO2)" evidence="19">
    <location>
        <position position="570"/>
    </location>
</feature>
<feature type="cross-link" description="Glycyl lysine isopeptide (Lys-Gly) (interchain with G-Cter in SUMO2)" evidence="18 19">
    <location>
        <position position="582"/>
    </location>
</feature>
<feature type="cross-link" description="Glycyl lysine isopeptide (Lys-Gly) (interchain with G-Cter in SUMO2)" evidence="19">
    <location>
        <position position="611"/>
    </location>
</feature>
<feature type="cross-link" description="Glycyl lysine isopeptide (Lys-Gly) (interchain with G-Cter in SUMO2)" evidence="19">
    <location>
        <position position="618"/>
    </location>
</feature>
<feature type="mutagenesis site" description="Abrogates both sequence-specific and methylation-dependent DNA-binding." evidence="10">
    <original>C</original>
    <variation>R</variation>
    <location>
        <position position="552"/>
    </location>
</feature>
<feature type="sequence conflict" description="In Ref. 2; CAD91170." evidence="16" ref="2">
    <original>D</original>
    <variation>Y</variation>
    <location>
        <position position="40"/>
    </location>
</feature>
<feature type="sequence conflict" description="In Ref. 2; CAD91170." evidence="16" ref="2">
    <original>E</original>
    <variation>G</variation>
    <location>
        <position position="179"/>
    </location>
</feature>
<feature type="sequence conflict" description="In Ref. 2; CAD91170/CAD97963 and 5; AAH42753." evidence="16" ref="2 5">
    <original>D</original>
    <variation>DD</variation>
    <location>
        <position position="189"/>
    </location>
</feature>
<feature type="sequence conflict" description="In Ref. 2; CAD91170." evidence="16" ref="2">
    <original>S</original>
    <variation>Y</variation>
    <location>
        <position position="362"/>
    </location>
</feature>
<feature type="sequence conflict" description="In Ref. 2; CAD98016." evidence="16" ref="2">
    <original>E</original>
    <variation>V</variation>
    <location>
        <position position="670"/>
    </location>
</feature>
<feature type="helix" evidence="20">
    <location>
        <begin position="14"/>
        <end position="27"/>
    </location>
</feature>
<feature type="turn" evidence="20">
    <location>
        <begin position="28"/>
        <end position="31"/>
    </location>
</feature>
<feature type="strand" evidence="20">
    <location>
        <begin position="34"/>
        <end position="38"/>
    </location>
</feature>
<feature type="strand" evidence="20">
    <location>
        <begin position="41"/>
        <end position="45"/>
    </location>
</feature>
<feature type="helix" evidence="20">
    <location>
        <begin position="47"/>
        <end position="53"/>
    </location>
</feature>
<feature type="helix" evidence="20">
    <location>
        <begin position="55"/>
        <end position="60"/>
    </location>
</feature>
<feature type="turn" evidence="21">
    <location>
        <begin position="61"/>
        <end position="63"/>
    </location>
</feature>
<feature type="strand" evidence="20">
    <location>
        <begin position="66"/>
        <end position="70"/>
    </location>
</feature>
<feature type="helix" evidence="20">
    <location>
        <begin position="75"/>
        <end position="85"/>
    </location>
</feature>
<feature type="helix" evidence="20">
    <location>
        <begin position="95"/>
        <end position="97"/>
    </location>
</feature>
<feature type="helix" evidence="20">
    <location>
        <begin position="98"/>
        <end position="108"/>
    </location>
</feature>
<feature type="helix" evidence="20">
    <location>
        <begin position="111"/>
        <end position="114"/>
    </location>
</feature>
<feature type="strand" evidence="23">
    <location>
        <begin position="483"/>
        <end position="488"/>
    </location>
</feature>
<feature type="strand" evidence="23">
    <location>
        <begin position="491"/>
        <end position="496"/>
    </location>
</feature>
<feature type="turn" evidence="23">
    <location>
        <begin position="497"/>
        <end position="499"/>
    </location>
</feature>
<feature type="strand" evidence="23">
    <location>
        <begin position="502"/>
        <end position="505"/>
    </location>
</feature>
<feature type="helix" evidence="23">
    <location>
        <begin position="506"/>
        <end position="517"/>
    </location>
</feature>
<feature type="strand" evidence="23">
    <location>
        <begin position="525"/>
        <end position="528"/>
    </location>
</feature>
<feature type="strand" evidence="23">
    <location>
        <begin position="530"/>
        <end position="533"/>
    </location>
</feature>
<feature type="helix" evidence="23">
    <location>
        <begin position="534"/>
        <end position="545"/>
    </location>
</feature>
<feature type="strand" evidence="23">
    <location>
        <begin position="550"/>
        <end position="552"/>
    </location>
</feature>
<feature type="turn" evidence="23">
    <location>
        <begin position="553"/>
        <end position="555"/>
    </location>
</feature>
<feature type="strand" evidence="23">
    <location>
        <begin position="558"/>
        <end position="561"/>
    </location>
</feature>
<feature type="helix" evidence="23">
    <location>
        <begin position="562"/>
        <end position="572"/>
    </location>
</feature>
<feature type="strand" evidence="23">
    <location>
        <begin position="579"/>
        <end position="581"/>
    </location>
</feature>
<feature type="strand" evidence="23">
    <location>
        <begin position="584"/>
        <end position="586"/>
    </location>
</feature>
<feature type="helix" evidence="22">
    <location>
        <begin position="598"/>
        <end position="600"/>
    </location>
</feature>
<name>KAISO_HUMAN</name>
<accession>Q86T24</accession>
<accession>B2R5U6</accession>
<accession>O00319</accession>
<accession>Q7Z361</accession>
<accession>Q8IVP6</accession>
<accession>Q8N3P0</accession>
<protein>
    <recommendedName>
        <fullName>Transcriptional regulator Kaiso</fullName>
    </recommendedName>
    <alternativeName>
        <fullName>Zinc finger and BTB domain-containing protein 33</fullName>
    </alternativeName>
</protein>
<gene>
    <name type="primary">ZBTB33</name>
    <name type="synonym">KAISO</name>
    <name type="synonym">ZNF348</name>
</gene>